<proteinExistence type="evidence at protein level"/>
<feature type="chain" id="PRO_0000439540" description="Glutamate synthase [NADPH] small chain">
    <location>
        <begin position="1"/>
        <end position="472"/>
    </location>
</feature>
<feature type="domain" description="4Fe-4S ferredoxin-type" evidence="2">
    <location>
        <begin position="41"/>
        <end position="72"/>
    </location>
</feature>
<feature type="binding site" evidence="2">
    <location>
        <position position="50"/>
    </location>
    <ligand>
        <name>[4Fe-4S] cluster</name>
        <dbReference type="ChEBI" id="CHEBI:49883"/>
    </ligand>
</feature>
<feature type="binding site" evidence="2">
    <location>
        <position position="53"/>
    </location>
    <ligand>
        <name>[4Fe-4S] cluster</name>
        <dbReference type="ChEBI" id="CHEBI:49883"/>
    </ligand>
</feature>
<feature type="binding site" evidence="2">
    <location>
        <position position="58"/>
    </location>
    <ligand>
        <name>[4Fe-4S] cluster</name>
        <dbReference type="ChEBI" id="CHEBI:49883"/>
    </ligand>
</feature>
<feature type="binding site" evidence="2">
    <location>
        <position position="62"/>
    </location>
    <ligand>
        <name>[4Fe-4S] cluster</name>
        <dbReference type="ChEBI" id="CHEBI:49883"/>
    </ligand>
</feature>
<keyword id="KW-0004">4Fe-4S</keyword>
<keyword id="KW-0028">Amino-acid biosynthesis</keyword>
<keyword id="KW-0314">Glutamate biosynthesis</keyword>
<keyword id="KW-0408">Iron</keyword>
<keyword id="KW-0411">Iron-sulfur</keyword>
<keyword id="KW-0479">Metal-binding</keyword>
<keyword id="KW-0521">NADP</keyword>
<keyword id="KW-0560">Oxidoreductase</keyword>
<comment type="function">
    <text evidence="3">Catalyzes the conversion of L-glutamine and 2-oxoglutarate into two molecules of L-glutamate.</text>
</comment>
<comment type="catalytic activity">
    <reaction evidence="3">
        <text>2 L-glutamate + NADP(+) = L-glutamine + 2-oxoglutarate + NADPH + H(+)</text>
        <dbReference type="Rhea" id="RHEA:15501"/>
        <dbReference type="ChEBI" id="CHEBI:15378"/>
        <dbReference type="ChEBI" id="CHEBI:16810"/>
        <dbReference type="ChEBI" id="CHEBI:29985"/>
        <dbReference type="ChEBI" id="CHEBI:57783"/>
        <dbReference type="ChEBI" id="CHEBI:58349"/>
        <dbReference type="ChEBI" id="CHEBI:58359"/>
        <dbReference type="EC" id="1.4.1.13"/>
    </reaction>
</comment>
<comment type="cofactor">
    <cofactor evidence="2">
        <name>[4Fe-4S] cluster</name>
        <dbReference type="ChEBI" id="CHEBI:49883"/>
    </cofactor>
    <text evidence="2">Binds 1 [4Fe-4S] cluster.</text>
</comment>
<comment type="pathway">
    <text evidence="1">Amino-acid biosynthesis; L-glutamate biosynthesis via GLT pathway; L-glutamate from 2-oxoglutarate and L-glutamine (NADP(+) route): step 1/1.</text>
</comment>
<comment type="pathway">
    <text evidence="1">Energy metabolism; nitrogen metabolism.</text>
</comment>
<comment type="induction">
    <text evidence="3">Up-regulated at high salt concentration.</text>
</comment>
<name>GLTD_HALED</name>
<accession>E1V8I0</accession>
<organism>
    <name type="scientific">Halomonas elongata (strain ATCC 33173 / DSM 2581 / NBRC 15536 / NCIMB 2198 / 1H9)</name>
    <dbReference type="NCBI Taxonomy" id="768066"/>
    <lineage>
        <taxon>Bacteria</taxon>
        <taxon>Pseudomonadati</taxon>
        <taxon>Pseudomonadota</taxon>
        <taxon>Gammaproteobacteria</taxon>
        <taxon>Oceanospirillales</taxon>
        <taxon>Halomonadaceae</taxon>
        <taxon>Halomonas</taxon>
    </lineage>
</organism>
<gene>
    <name evidence="4" type="primary">gltD</name>
    <name evidence="5" type="ordered locus">HELO_3752</name>
</gene>
<sequence length="472" mass="51995">MANRLNNDFQFIDVGRQDPEKKPARTRAKQFAEIYEPYKPQDAAAQAHRCLHCGNPYCEWKCPVHNYIPNWLQLVSEGNILEAAELSHRTNSLPEVCGRVCPQDRLCEGDCTLNDGFGAVTIGSVEKYITDTAFAMGWRPDMSKVTWTDKKVAIIGAGPAGLGCADILVRNGVKPVVFDKYPEIGGLLTFGIPEFKLEKTVMERRRAVFEEMGVEFCLGVEIGRDMPFEQLLEEYDAVFLGMGTYKYMEGGFPGEDLPGVHKALDYLVANVNHCLGFETDPADYVSLEGQRVVVLGGGDTAMDCNRTAIRQGAASVTCAYRRDEDNMPGSRKEVANAREEGVDFLFNRQPVAVIGEDRVEGIKVVRTRLGEPDENGRQRPEVVPGSEEVVPADAVVIAFGFQPSPAPWFETVGIELDEKGRVKAPEEGAYAFQTTNEKIFAGGDMVRGSDLVVTAVFEGRQAGEGILDYLDV</sequence>
<dbReference type="EC" id="1.4.1.13" evidence="3"/>
<dbReference type="EMBL" id="FN869568">
    <property type="protein sequence ID" value="CBV43636.1"/>
    <property type="molecule type" value="Genomic_DNA"/>
</dbReference>
<dbReference type="RefSeq" id="WP_013333508.1">
    <property type="nucleotide sequence ID" value="NC_014532.2"/>
</dbReference>
<dbReference type="SMR" id="E1V8I0"/>
<dbReference type="STRING" id="768066.HELO_3752"/>
<dbReference type="GeneID" id="91011153"/>
<dbReference type="KEGG" id="hel:HELO_3752"/>
<dbReference type="eggNOG" id="COG0493">
    <property type="taxonomic scope" value="Bacteria"/>
</dbReference>
<dbReference type="HOGENOM" id="CLU_000422_3_1_6"/>
<dbReference type="OrthoDB" id="9803192at2"/>
<dbReference type="UniPathway" id="UPA00045"/>
<dbReference type="UniPathway" id="UPA00634">
    <property type="reaction ID" value="UER00689"/>
</dbReference>
<dbReference type="Proteomes" id="UP000008707">
    <property type="component" value="Chromosome"/>
</dbReference>
<dbReference type="GO" id="GO:0051539">
    <property type="term" value="F:4 iron, 4 sulfur cluster binding"/>
    <property type="evidence" value="ECO:0007669"/>
    <property type="project" value="UniProtKB-KW"/>
</dbReference>
<dbReference type="GO" id="GO:0004355">
    <property type="term" value="F:glutamate synthase (NADPH) activity"/>
    <property type="evidence" value="ECO:0007669"/>
    <property type="project" value="UniProtKB-EC"/>
</dbReference>
<dbReference type="GO" id="GO:0046872">
    <property type="term" value="F:metal ion binding"/>
    <property type="evidence" value="ECO:0007669"/>
    <property type="project" value="UniProtKB-KW"/>
</dbReference>
<dbReference type="GO" id="GO:0097054">
    <property type="term" value="P:L-glutamate biosynthetic process"/>
    <property type="evidence" value="ECO:0007669"/>
    <property type="project" value="UniProtKB-UniPathway"/>
</dbReference>
<dbReference type="FunFam" id="3.50.50.60:FF:000068">
    <property type="entry name" value="Glutamate synthase small subunit"/>
    <property type="match status" value="1"/>
</dbReference>
<dbReference type="FunFam" id="1.10.1060.10:FF:000004">
    <property type="entry name" value="Glutamate synthase, small subunit"/>
    <property type="match status" value="1"/>
</dbReference>
<dbReference type="Gene3D" id="1.10.1060.10">
    <property type="entry name" value="Alpha-helical ferredoxin"/>
    <property type="match status" value="1"/>
</dbReference>
<dbReference type="Gene3D" id="3.50.50.60">
    <property type="entry name" value="FAD/NAD(P)-binding domain"/>
    <property type="match status" value="1"/>
</dbReference>
<dbReference type="Gene3D" id="3.40.50.720">
    <property type="entry name" value="NAD(P)-binding Rossmann-like Domain"/>
    <property type="match status" value="1"/>
</dbReference>
<dbReference type="InterPro" id="IPR028261">
    <property type="entry name" value="DPD_II"/>
</dbReference>
<dbReference type="InterPro" id="IPR036188">
    <property type="entry name" value="FAD/NAD-bd_sf"/>
</dbReference>
<dbReference type="InterPro" id="IPR023753">
    <property type="entry name" value="FAD/NAD-binding_dom"/>
</dbReference>
<dbReference type="InterPro" id="IPR006006">
    <property type="entry name" value="GltD-like"/>
</dbReference>
<dbReference type="InterPro" id="IPR009051">
    <property type="entry name" value="Helical_ferredxn"/>
</dbReference>
<dbReference type="NCBIfam" id="TIGR01318">
    <property type="entry name" value="gltD_gamma_fam"/>
    <property type="match status" value="1"/>
</dbReference>
<dbReference type="PANTHER" id="PTHR42783">
    <property type="entry name" value="GLUTAMATE SYNTHASE [NADPH] SMALL CHAIN"/>
    <property type="match status" value="1"/>
</dbReference>
<dbReference type="PANTHER" id="PTHR42783:SF3">
    <property type="entry name" value="GLUTAMATE SYNTHASE [NADPH] SMALL CHAIN-RELATED"/>
    <property type="match status" value="1"/>
</dbReference>
<dbReference type="Pfam" id="PF14691">
    <property type="entry name" value="Fer4_20"/>
    <property type="match status" value="1"/>
</dbReference>
<dbReference type="Pfam" id="PF07992">
    <property type="entry name" value="Pyr_redox_2"/>
    <property type="match status" value="1"/>
</dbReference>
<dbReference type="PRINTS" id="PR00419">
    <property type="entry name" value="ADXRDTASE"/>
</dbReference>
<dbReference type="SUPFAM" id="SSF46548">
    <property type="entry name" value="alpha-helical ferredoxin"/>
    <property type="match status" value="1"/>
</dbReference>
<dbReference type="SUPFAM" id="SSF51971">
    <property type="entry name" value="Nucleotide-binding domain"/>
    <property type="match status" value="1"/>
</dbReference>
<protein>
    <recommendedName>
        <fullName evidence="1">Glutamate synthase [NADPH] small chain</fullName>
        <ecNumber evidence="3">1.4.1.13</ecNumber>
    </recommendedName>
    <alternativeName>
        <fullName evidence="4">GOGAT</fullName>
    </alternativeName>
    <alternativeName>
        <fullName evidence="1">Glutamate synthase subunit beta</fullName>
        <shortName evidence="1">GLTS beta chain</shortName>
    </alternativeName>
</protein>
<reference key="1">
    <citation type="journal article" date="2011" name="Environ. Microbiol.">
        <title>A blueprint of ectoine metabolism from the genome of the industrial producer Halomonas elongata DSM 2581(T).</title>
        <authorList>
            <person name="Schwibbert K."/>
            <person name="Marin-Sanguino A."/>
            <person name="Bagyan I."/>
            <person name="Heidrich G."/>
            <person name="Lentzen G."/>
            <person name="Seitz H."/>
            <person name="Rampp M."/>
            <person name="Schuster S.C."/>
            <person name="Klenk H.P."/>
            <person name="Pfeiffer F."/>
            <person name="Oesterhelt D."/>
            <person name="Kunte H.J."/>
        </authorList>
    </citation>
    <scope>NUCLEOTIDE SEQUENCE [LARGE SCALE GENOMIC DNA]</scope>
    <source>
        <strain>ATCC 33173 / DSM 2581 / NBRC 15536 / NCIMB 2198 / 1H9</strain>
    </source>
</reference>
<reference key="2">
    <citation type="journal article" date="2017" name="PLoS ONE">
        <title>Osmoregulation in the halophilic bacterium Halomonas elongata: a case study for integrative systems biology.</title>
        <authorList>
            <person name="Kindzierski V."/>
            <person name="Raschke S."/>
            <person name="Knabe N."/>
            <person name="Siedler F."/>
            <person name="Scheffer B."/>
            <person name="Pflueger-Grau K."/>
            <person name="Pfeiffer F."/>
            <person name="Oesterhelt D."/>
            <person name="Marin-Sanguino A."/>
            <person name="Kunte H.J."/>
        </authorList>
    </citation>
    <scope>FUNCTION</scope>
    <scope>CATALYTIC ACTIVITY</scope>
    <scope>INDUCTION</scope>
    <source>
        <strain>ATCC 33173 / DSM 2581 / NBRC 15536 / NCIMB 2198 / 1H9</strain>
    </source>
</reference>
<evidence type="ECO:0000250" key="1">
    <source>
        <dbReference type="UniProtKB" id="P09832"/>
    </source>
</evidence>
<evidence type="ECO:0000255" key="2">
    <source>
        <dbReference type="PROSITE-ProRule" id="PRU00711"/>
    </source>
</evidence>
<evidence type="ECO:0000269" key="3">
    <source>
    </source>
</evidence>
<evidence type="ECO:0000303" key="4">
    <source>
    </source>
</evidence>
<evidence type="ECO:0000312" key="5">
    <source>
        <dbReference type="EMBL" id="CBV43636.1"/>
    </source>
</evidence>